<name>RIBBA_NOCFA</name>
<reference key="1">
    <citation type="journal article" date="2004" name="Proc. Natl. Acad. Sci. U.S.A.">
        <title>The complete genomic sequence of Nocardia farcinica IFM 10152.</title>
        <authorList>
            <person name="Ishikawa J."/>
            <person name="Yamashita A."/>
            <person name="Mikami Y."/>
            <person name="Hoshino Y."/>
            <person name="Kurita H."/>
            <person name="Hotta K."/>
            <person name="Shiba T."/>
            <person name="Hattori M."/>
        </authorList>
    </citation>
    <scope>NUCLEOTIDE SEQUENCE [LARGE SCALE GENOMIC DNA]</scope>
    <source>
        <strain>IFM 10152</strain>
    </source>
</reference>
<feature type="chain" id="PRO_1000067429" description="Riboflavin biosynthesis protein RibBA">
    <location>
        <begin position="1"/>
        <end position="414"/>
    </location>
</feature>
<feature type="region of interest" description="DHBP synthase">
    <location>
        <begin position="1"/>
        <end position="204"/>
    </location>
</feature>
<feature type="region of interest" description="GTP cyclohydrolase II">
    <location>
        <begin position="205"/>
        <end position="414"/>
    </location>
</feature>
<feature type="active site" description="Proton acceptor; for GTP cyclohydrolase activity" evidence="1">
    <location>
        <position position="333"/>
    </location>
</feature>
<feature type="active site" description="Nucleophile; for GTP cyclohydrolase activity" evidence="1">
    <location>
        <position position="335"/>
    </location>
</feature>
<feature type="binding site" evidence="1">
    <location>
        <begin position="28"/>
        <end position="29"/>
    </location>
    <ligand>
        <name>D-ribulose 5-phosphate</name>
        <dbReference type="ChEBI" id="CHEBI:58121"/>
    </ligand>
</feature>
<feature type="binding site" evidence="1">
    <location>
        <position position="29"/>
    </location>
    <ligand>
        <name>Mg(2+)</name>
        <dbReference type="ChEBI" id="CHEBI:18420"/>
        <label>1</label>
    </ligand>
</feature>
<feature type="binding site" evidence="1">
    <location>
        <position position="29"/>
    </location>
    <ligand>
        <name>Mg(2+)</name>
        <dbReference type="ChEBI" id="CHEBI:18420"/>
        <label>2</label>
    </ligand>
</feature>
<feature type="binding site" evidence="1">
    <location>
        <position position="33"/>
    </location>
    <ligand>
        <name>D-ribulose 5-phosphate</name>
        <dbReference type="ChEBI" id="CHEBI:58121"/>
    </ligand>
</feature>
<feature type="binding site" evidence="1">
    <location>
        <begin position="141"/>
        <end position="145"/>
    </location>
    <ligand>
        <name>D-ribulose 5-phosphate</name>
        <dbReference type="ChEBI" id="CHEBI:58121"/>
    </ligand>
</feature>
<feature type="binding site" evidence="1">
    <location>
        <position position="144"/>
    </location>
    <ligand>
        <name>Mg(2+)</name>
        <dbReference type="ChEBI" id="CHEBI:18420"/>
        <label>2</label>
    </ligand>
</feature>
<feature type="binding site" evidence="1">
    <location>
        <position position="165"/>
    </location>
    <ligand>
        <name>D-ribulose 5-phosphate</name>
        <dbReference type="ChEBI" id="CHEBI:58121"/>
    </ligand>
</feature>
<feature type="binding site" evidence="1">
    <location>
        <begin position="255"/>
        <end position="259"/>
    </location>
    <ligand>
        <name>GTP</name>
        <dbReference type="ChEBI" id="CHEBI:37565"/>
    </ligand>
</feature>
<feature type="binding site" evidence="1">
    <location>
        <position position="260"/>
    </location>
    <ligand>
        <name>Zn(2+)</name>
        <dbReference type="ChEBI" id="CHEBI:29105"/>
        <note>catalytic</note>
    </ligand>
</feature>
<feature type="binding site" evidence="1">
    <location>
        <position position="271"/>
    </location>
    <ligand>
        <name>Zn(2+)</name>
        <dbReference type="ChEBI" id="CHEBI:29105"/>
        <note>catalytic</note>
    </ligand>
</feature>
<feature type="binding site" evidence="1">
    <location>
        <position position="273"/>
    </location>
    <ligand>
        <name>Zn(2+)</name>
        <dbReference type="ChEBI" id="CHEBI:29105"/>
        <note>catalytic</note>
    </ligand>
</feature>
<feature type="binding site" evidence="1">
    <location>
        <position position="276"/>
    </location>
    <ligand>
        <name>GTP</name>
        <dbReference type="ChEBI" id="CHEBI:37565"/>
    </ligand>
</feature>
<feature type="binding site" evidence="1">
    <location>
        <begin position="299"/>
        <end position="301"/>
    </location>
    <ligand>
        <name>GTP</name>
        <dbReference type="ChEBI" id="CHEBI:37565"/>
    </ligand>
</feature>
<feature type="binding site" evidence="1">
    <location>
        <position position="321"/>
    </location>
    <ligand>
        <name>GTP</name>
        <dbReference type="ChEBI" id="CHEBI:37565"/>
    </ligand>
</feature>
<feature type="binding site" evidence="1">
    <location>
        <position position="356"/>
    </location>
    <ligand>
        <name>GTP</name>
        <dbReference type="ChEBI" id="CHEBI:37565"/>
    </ligand>
</feature>
<feature type="binding site" evidence="1">
    <location>
        <position position="361"/>
    </location>
    <ligand>
        <name>GTP</name>
        <dbReference type="ChEBI" id="CHEBI:37565"/>
    </ligand>
</feature>
<feature type="site" description="Essential for DHBP synthase activity" evidence="1">
    <location>
        <position position="127"/>
    </location>
</feature>
<feature type="site" description="Essential for DHBP synthase activity" evidence="1">
    <location>
        <position position="165"/>
    </location>
</feature>
<comment type="function">
    <text evidence="1">Catalyzes the conversion of D-ribulose 5-phosphate to formate and 3,4-dihydroxy-2-butanone 4-phosphate.</text>
</comment>
<comment type="function">
    <text evidence="1">Catalyzes the conversion of GTP to 2,5-diamino-6-ribosylamino-4(3H)-pyrimidinone 5'-phosphate (DARP), formate and pyrophosphate.</text>
</comment>
<comment type="catalytic activity">
    <reaction evidence="1">
        <text>D-ribulose 5-phosphate = (2S)-2-hydroxy-3-oxobutyl phosphate + formate + H(+)</text>
        <dbReference type="Rhea" id="RHEA:18457"/>
        <dbReference type="ChEBI" id="CHEBI:15378"/>
        <dbReference type="ChEBI" id="CHEBI:15740"/>
        <dbReference type="ChEBI" id="CHEBI:58121"/>
        <dbReference type="ChEBI" id="CHEBI:58830"/>
        <dbReference type="EC" id="4.1.99.12"/>
    </reaction>
</comment>
<comment type="catalytic activity">
    <reaction evidence="1">
        <text>GTP + 4 H2O = 2,5-diamino-6-hydroxy-4-(5-phosphoribosylamino)-pyrimidine + formate + 2 phosphate + 3 H(+)</text>
        <dbReference type="Rhea" id="RHEA:23704"/>
        <dbReference type="ChEBI" id="CHEBI:15377"/>
        <dbReference type="ChEBI" id="CHEBI:15378"/>
        <dbReference type="ChEBI" id="CHEBI:15740"/>
        <dbReference type="ChEBI" id="CHEBI:37565"/>
        <dbReference type="ChEBI" id="CHEBI:43474"/>
        <dbReference type="ChEBI" id="CHEBI:58614"/>
        <dbReference type="EC" id="3.5.4.25"/>
    </reaction>
</comment>
<comment type="cofactor">
    <cofactor evidence="1">
        <name>Mg(2+)</name>
        <dbReference type="ChEBI" id="CHEBI:18420"/>
    </cofactor>
    <cofactor evidence="1">
        <name>Mn(2+)</name>
        <dbReference type="ChEBI" id="CHEBI:29035"/>
    </cofactor>
    <text evidence="1">Binds 2 divalent metal cations per subunit. Magnesium or manganese.</text>
</comment>
<comment type="cofactor">
    <cofactor evidence="1">
        <name>Zn(2+)</name>
        <dbReference type="ChEBI" id="CHEBI:29105"/>
    </cofactor>
    <text evidence="1">Binds 1 zinc ion per subunit.</text>
</comment>
<comment type="pathway">
    <text evidence="1">Cofactor biosynthesis; riboflavin biosynthesis; 2-hydroxy-3-oxobutyl phosphate from D-ribulose 5-phosphate: step 1/1.</text>
</comment>
<comment type="pathway">
    <text evidence="1">Cofactor biosynthesis; riboflavin biosynthesis; 5-amino-6-(D-ribitylamino)uracil from GTP: step 1/4.</text>
</comment>
<comment type="similarity">
    <text evidence="1">In the N-terminal section; belongs to the DHBP synthase family.</text>
</comment>
<comment type="similarity">
    <text evidence="1">In the C-terminal section; belongs to the GTP cyclohydrolase II family.</text>
</comment>
<accession>Q5YTP3</accession>
<evidence type="ECO:0000255" key="1">
    <source>
        <dbReference type="HAMAP-Rule" id="MF_01283"/>
    </source>
</evidence>
<protein>
    <recommendedName>
        <fullName evidence="1">Riboflavin biosynthesis protein RibBA</fullName>
    </recommendedName>
    <domain>
        <recommendedName>
            <fullName evidence="1">3,4-dihydroxy-2-butanone 4-phosphate synthase</fullName>
            <shortName evidence="1">DHBP synthase</shortName>
            <ecNumber evidence="1">4.1.99.12</ecNumber>
        </recommendedName>
    </domain>
    <domain>
        <recommendedName>
            <fullName evidence="1">GTP cyclohydrolase-2</fullName>
            <ecNumber evidence="1">3.5.4.25</ecNumber>
        </recommendedName>
        <alternativeName>
            <fullName evidence="1">GTP cyclohydrolase II</fullName>
        </alternativeName>
    </domain>
</protein>
<sequence>MTRFDTIERAVADIAAGKAVVVVDDEDRENEGDLIFAAEKATPELVAFMIRYTSGYICVPLTGEDCDRLGLPPMYATNQDKHGTAYTVSVDAREGITTGISAADRATTMRLLADADAKADDLTRPGHVVPLRAKDGGVLRRPGHTEAAVDLARMAGLRPAGVICEIVSQKDEGHMARTEELRVFADDHDLALISIADMIAWRRKHEKQVVRVAEARIPTAHGAFTAVGYQSIYDDVEHVALVRGDIGDGEDVLVRVHSECLTGDVFGSLRCDCGPQLDAALEMVDQEGRGVVLYMRGHEGRGIGLMHKLQAYQLQDSGRDTVDANLDLGLPADARDYGTGAQILVDLGIRSMRLLTNNPAKRVGLDGYGLTITERVPMPLRANAENLRYLRTKRDRMGHDLVGLDDLDLGETAQ</sequence>
<organism>
    <name type="scientific">Nocardia farcinica (strain IFM 10152)</name>
    <dbReference type="NCBI Taxonomy" id="247156"/>
    <lineage>
        <taxon>Bacteria</taxon>
        <taxon>Bacillati</taxon>
        <taxon>Actinomycetota</taxon>
        <taxon>Actinomycetes</taxon>
        <taxon>Mycobacteriales</taxon>
        <taxon>Nocardiaceae</taxon>
        <taxon>Nocardia</taxon>
    </lineage>
</organism>
<dbReference type="EC" id="4.1.99.12" evidence="1"/>
<dbReference type="EC" id="3.5.4.25" evidence="1"/>
<dbReference type="EMBL" id="AP006618">
    <property type="protein sequence ID" value="BAD58448.1"/>
    <property type="molecule type" value="Genomic_DNA"/>
</dbReference>
<dbReference type="RefSeq" id="WP_011210133.1">
    <property type="nucleotide sequence ID" value="NC_006361.1"/>
</dbReference>
<dbReference type="SMR" id="Q5YTP3"/>
<dbReference type="STRING" id="247156.NFA_36000"/>
<dbReference type="GeneID" id="61134296"/>
<dbReference type="KEGG" id="nfa:NFA_36000"/>
<dbReference type="eggNOG" id="COG0108">
    <property type="taxonomic scope" value="Bacteria"/>
</dbReference>
<dbReference type="eggNOG" id="COG0807">
    <property type="taxonomic scope" value="Bacteria"/>
</dbReference>
<dbReference type="HOGENOM" id="CLU_020273_1_2_11"/>
<dbReference type="OrthoDB" id="9793111at2"/>
<dbReference type="UniPathway" id="UPA00275">
    <property type="reaction ID" value="UER00399"/>
</dbReference>
<dbReference type="UniPathway" id="UPA00275">
    <property type="reaction ID" value="UER00400"/>
</dbReference>
<dbReference type="Proteomes" id="UP000006820">
    <property type="component" value="Chromosome"/>
</dbReference>
<dbReference type="GO" id="GO:0005829">
    <property type="term" value="C:cytosol"/>
    <property type="evidence" value="ECO:0007669"/>
    <property type="project" value="TreeGrafter"/>
</dbReference>
<dbReference type="GO" id="GO:0008686">
    <property type="term" value="F:3,4-dihydroxy-2-butanone-4-phosphate synthase activity"/>
    <property type="evidence" value="ECO:0007669"/>
    <property type="project" value="UniProtKB-UniRule"/>
</dbReference>
<dbReference type="GO" id="GO:0005525">
    <property type="term" value="F:GTP binding"/>
    <property type="evidence" value="ECO:0007669"/>
    <property type="project" value="UniProtKB-KW"/>
</dbReference>
<dbReference type="GO" id="GO:0003935">
    <property type="term" value="F:GTP cyclohydrolase II activity"/>
    <property type="evidence" value="ECO:0007669"/>
    <property type="project" value="UniProtKB-UniRule"/>
</dbReference>
<dbReference type="GO" id="GO:0000287">
    <property type="term" value="F:magnesium ion binding"/>
    <property type="evidence" value="ECO:0007669"/>
    <property type="project" value="UniProtKB-UniRule"/>
</dbReference>
<dbReference type="GO" id="GO:0030145">
    <property type="term" value="F:manganese ion binding"/>
    <property type="evidence" value="ECO:0007669"/>
    <property type="project" value="UniProtKB-UniRule"/>
</dbReference>
<dbReference type="GO" id="GO:0008270">
    <property type="term" value="F:zinc ion binding"/>
    <property type="evidence" value="ECO:0007669"/>
    <property type="project" value="UniProtKB-UniRule"/>
</dbReference>
<dbReference type="GO" id="GO:0009231">
    <property type="term" value="P:riboflavin biosynthetic process"/>
    <property type="evidence" value="ECO:0007669"/>
    <property type="project" value="UniProtKB-UniRule"/>
</dbReference>
<dbReference type="CDD" id="cd00641">
    <property type="entry name" value="GTP_cyclohydro2"/>
    <property type="match status" value="1"/>
</dbReference>
<dbReference type="FunFam" id="3.40.50.10990:FF:000001">
    <property type="entry name" value="Riboflavin biosynthesis protein RibBA"/>
    <property type="match status" value="1"/>
</dbReference>
<dbReference type="FunFam" id="3.90.870.10:FF:000001">
    <property type="entry name" value="Riboflavin biosynthesis protein RibBA"/>
    <property type="match status" value="1"/>
</dbReference>
<dbReference type="Gene3D" id="3.90.870.10">
    <property type="entry name" value="DHBP synthase"/>
    <property type="match status" value="1"/>
</dbReference>
<dbReference type="Gene3D" id="3.40.50.10990">
    <property type="entry name" value="GTP cyclohydrolase II"/>
    <property type="match status" value="1"/>
</dbReference>
<dbReference type="HAMAP" id="MF_00179">
    <property type="entry name" value="RibA"/>
    <property type="match status" value="1"/>
</dbReference>
<dbReference type="HAMAP" id="MF_00180">
    <property type="entry name" value="RibB"/>
    <property type="match status" value="1"/>
</dbReference>
<dbReference type="HAMAP" id="MF_01283">
    <property type="entry name" value="RibBA"/>
    <property type="match status" value="1"/>
</dbReference>
<dbReference type="InterPro" id="IPR017945">
    <property type="entry name" value="DHBP_synth_RibB-like_a/b_dom"/>
</dbReference>
<dbReference type="InterPro" id="IPR000422">
    <property type="entry name" value="DHBP_synthase_RibB"/>
</dbReference>
<dbReference type="InterPro" id="IPR032677">
    <property type="entry name" value="GTP_cyclohydro_II"/>
</dbReference>
<dbReference type="InterPro" id="IPR000926">
    <property type="entry name" value="RibA"/>
</dbReference>
<dbReference type="InterPro" id="IPR036144">
    <property type="entry name" value="RibA-like_sf"/>
</dbReference>
<dbReference type="InterPro" id="IPR016299">
    <property type="entry name" value="Riboflavin_synth_RibBA"/>
</dbReference>
<dbReference type="NCBIfam" id="NF001591">
    <property type="entry name" value="PRK00393.1"/>
    <property type="match status" value="1"/>
</dbReference>
<dbReference type="NCBIfam" id="NF006803">
    <property type="entry name" value="PRK09311.1"/>
    <property type="match status" value="1"/>
</dbReference>
<dbReference type="NCBIfam" id="TIGR00505">
    <property type="entry name" value="ribA"/>
    <property type="match status" value="1"/>
</dbReference>
<dbReference type="NCBIfam" id="TIGR00506">
    <property type="entry name" value="ribB"/>
    <property type="match status" value="1"/>
</dbReference>
<dbReference type="PANTHER" id="PTHR21327:SF18">
    <property type="entry name" value="3,4-DIHYDROXY-2-BUTANONE 4-PHOSPHATE SYNTHASE"/>
    <property type="match status" value="1"/>
</dbReference>
<dbReference type="PANTHER" id="PTHR21327">
    <property type="entry name" value="GTP CYCLOHYDROLASE II-RELATED"/>
    <property type="match status" value="1"/>
</dbReference>
<dbReference type="Pfam" id="PF00926">
    <property type="entry name" value="DHBP_synthase"/>
    <property type="match status" value="1"/>
</dbReference>
<dbReference type="Pfam" id="PF00925">
    <property type="entry name" value="GTP_cyclohydro2"/>
    <property type="match status" value="1"/>
</dbReference>
<dbReference type="PIRSF" id="PIRSF001259">
    <property type="entry name" value="RibA"/>
    <property type="match status" value="1"/>
</dbReference>
<dbReference type="SUPFAM" id="SSF142695">
    <property type="entry name" value="RibA-like"/>
    <property type="match status" value="1"/>
</dbReference>
<dbReference type="SUPFAM" id="SSF55821">
    <property type="entry name" value="YrdC/RibB"/>
    <property type="match status" value="1"/>
</dbReference>
<proteinExistence type="inferred from homology"/>
<keyword id="KW-0342">GTP-binding</keyword>
<keyword id="KW-0378">Hydrolase</keyword>
<keyword id="KW-0456">Lyase</keyword>
<keyword id="KW-0460">Magnesium</keyword>
<keyword id="KW-0464">Manganese</keyword>
<keyword id="KW-0479">Metal-binding</keyword>
<keyword id="KW-0511">Multifunctional enzyme</keyword>
<keyword id="KW-0547">Nucleotide-binding</keyword>
<keyword id="KW-1185">Reference proteome</keyword>
<keyword id="KW-0686">Riboflavin biosynthesis</keyword>
<keyword id="KW-0862">Zinc</keyword>
<gene>
    <name evidence="1" type="primary">ribBA</name>
    <name type="ordered locus">NFA_36000</name>
</gene>